<comment type="function">
    <text evidence="1">Specifically methylates guanosine-37 in various tRNAs.</text>
</comment>
<comment type="catalytic activity">
    <reaction evidence="1">
        <text>guanosine(37) in tRNA + S-adenosyl-L-methionine = N(1)-methylguanosine(37) in tRNA + S-adenosyl-L-homocysteine + H(+)</text>
        <dbReference type="Rhea" id="RHEA:36899"/>
        <dbReference type="Rhea" id="RHEA-COMP:10145"/>
        <dbReference type="Rhea" id="RHEA-COMP:10147"/>
        <dbReference type="ChEBI" id="CHEBI:15378"/>
        <dbReference type="ChEBI" id="CHEBI:57856"/>
        <dbReference type="ChEBI" id="CHEBI:59789"/>
        <dbReference type="ChEBI" id="CHEBI:73542"/>
        <dbReference type="ChEBI" id="CHEBI:74269"/>
        <dbReference type="EC" id="2.1.1.228"/>
    </reaction>
</comment>
<comment type="subunit">
    <text evidence="1">Homodimer.</text>
</comment>
<comment type="subcellular location">
    <subcellularLocation>
        <location evidence="1">Cytoplasm</location>
    </subcellularLocation>
</comment>
<comment type="similarity">
    <text evidence="1">Belongs to the RNA methyltransferase TrmD family.</text>
</comment>
<accession>Q65JP6</accession>
<accession>Q62V51</accession>
<sequence>MKIDFLTLFPEMFEGVLGSSILQKAQDKDAVRFRVVNFRAYSDNKHQTVDDYPYGGGAGMVLKPQPVFDAVEKLTAEAGGSPRIILVCPQGERYTQQKAEELAREEHLMFICGHYEGYDERIREHLSTDEISIGDFVLTGGELPAMMIADSVVRLLPGVLGKEESHLEDSFSTGLLEHPHYTRPADYKGLKVPDVLTSGNHAKIKEWRRKESLRRTFLRRPDLLENYPLSEEERKWISEWKNR</sequence>
<gene>
    <name evidence="1" type="primary">trmD</name>
    <name type="ordered locus">BLi01823</name>
    <name type="ordered locus">BL01291</name>
</gene>
<keyword id="KW-0963">Cytoplasm</keyword>
<keyword id="KW-0489">Methyltransferase</keyword>
<keyword id="KW-1185">Reference proteome</keyword>
<keyword id="KW-0949">S-adenosyl-L-methionine</keyword>
<keyword id="KW-0808">Transferase</keyword>
<keyword id="KW-0819">tRNA processing</keyword>
<proteinExistence type="inferred from homology"/>
<evidence type="ECO:0000255" key="1">
    <source>
        <dbReference type="HAMAP-Rule" id="MF_00605"/>
    </source>
</evidence>
<organism>
    <name type="scientific">Bacillus licheniformis (strain ATCC 14580 / DSM 13 / JCM 2505 / CCUG 7422 / NBRC 12200 / NCIMB 9375 / NCTC 10341 / NRRL NRS-1264 / Gibson 46)</name>
    <dbReference type="NCBI Taxonomy" id="279010"/>
    <lineage>
        <taxon>Bacteria</taxon>
        <taxon>Bacillati</taxon>
        <taxon>Bacillota</taxon>
        <taxon>Bacilli</taxon>
        <taxon>Bacillales</taxon>
        <taxon>Bacillaceae</taxon>
        <taxon>Bacillus</taxon>
    </lineage>
</organism>
<name>TRMD_BACLD</name>
<dbReference type="EC" id="2.1.1.228" evidence="1"/>
<dbReference type="EMBL" id="AE017333">
    <property type="protein sequence ID" value="AAU40718.1"/>
    <property type="molecule type" value="Genomic_DNA"/>
</dbReference>
<dbReference type="EMBL" id="CP000002">
    <property type="protein sequence ID" value="AAU23358.2"/>
    <property type="molecule type" value="Genomic_DNA"/>
</dbReference>
<dbReference type="RefSeq" id="WP_003181726.1">
    <property type="nucleotide sequence ID" value="NC_006322.1"/>
</dbReference>
<dbReference type="SMR" id="Q65JP6"/>
<dbReference type="STRING" id="279010.BL01291"/>
<dbReference type="KEGG" id="bld:BLi01823"/>
<dbReference type="KEGG" id="bli:BL01291"/>
<dbReference type="eggNOG" id="COG0336">
    <property type="taxonomic scope" value="Bacteria"/>
</dbReference>
<dbReference type="HOGENOM" id="CLU_047363_0_1_9"/>
<dbReference type="Proteomes" id="UP000000606">
    <property type="component" value="Chromosome"/>
</dbReference>
<dbReference type="GO" id="GO:0005829">
    <property type="term" value="C:cytosol"/>
    <property type="evidence" value="ECO:0007669"/>
    <property type="project" value="TreeGrafter"/>
</dbReference>
<dbReference type="GO" id="GO:0052906">
    <property type="term" value="F:tRNA (guanine(37)-N1)-methyltransferase activity"/>
    <property type="evidence" value="ECO:0007669"/>
    <property type="project" value="UniProtKB-UniRule"/>
</dbReference>
<dbReference type="GO" id="GO:0002939">
    <property type="term" value="P:tRNA N1-guanine methylation"/>
    <property type="evidence" value="ECO:0007669"/>
    <property type="project" value="TreeGrafter"/>
</dbReference>
<dbReference type="CDD" id="cd18080">
    <property type="entry name" value="TrmD-like"/>
    <property type="match status" value="1"/>
</dbReference>
<dbReference type="FunFam" id="1.10.1270.20:FF:000001">
    <property type="entry name" value="tRNA (guanine-N(1)-)-methyltransferase"/>
    <property type="match status" value="1"/>
</dbReference>
<dbReference type="FunFam" id="3.40.1280.10:FF:000001">
    <property type="entry name" value="tRNA (guanine-N(1)-)-methyltransferase"/>
    <property type="match status" value="1"/>
</dbReference>
<dbReference type="Gene3D" id="3.40.1280.10">
    <property type="match status" value="1"/>
</dbReference>
<dbReference type="Gene3D" id="1.10.1270.20">
    <property type="entry name" value="tRNA(m1g37)methyltransferase, domain 2"/>
    <property type="match status" value="1"/>
</dbReference>
<dbReference type="HAMAP" id="MF_00605">
    <property type="entry name" value="TrmD"/>
    <property type="match status" value="1"/>
</dbReference>
<dbReference type="InterPro" id="IPR029028">
    <property type="entry name" value="Alpha/beta_knot_MTases"/>
</dbReference>
<dbReference type="InterPro" id="IPR023148">
    <property type="entry name" value="tRNA_m1G_MeTrfase_C_sf"/>
</dbReference>
<dbReference type="InterPro" id="IPR002649">
    <property type="entry name" value="tRNA_m1G_MeTrfase_TrmD"/>
</dbReference>
<dbReference type="InterPro" id="IPR029026">
    <property type="entry name" value="tRNA_m1G_MTases_N"/>
</dbReference>
<dbReference type="InterPro" id="IPR016009">
    <property type="entry name" value="tRNA_MeTrfase_TRMD/TRM10"/>
</dbReference>
<dbReference type="NCBIfam" id="NF000648">
    <property type="entry name" value="PRK00026.1"/>
    <property type="match status" value="1"/>
</dbReference>
<dbReference type="NCBIfam" id="TIGR00088">
    <property type="entry name" value="trmD"/>
    <property type="match status" value="1"/>
</dbReference>
<dbReference type="PANTHER" id="PTHR46417">
    <property type="entry name" value="TRNA (GUANINE-N(1)-)-METHYLTRANSFERASE"/>
    <property type="match status" value="1"/>
</dbReference>
<dbReference type="PANTHER" id="PTHR46417:SF1">
    <property type="entry name" value="TRNA (GUANINE-N(1)-)-METHYLTRANSFERASE"/>
    <property type="match status" value="1"/>
</dbReference>
<dbReference type="Pfam" id="PF01746">
    <property type="entry name" value="tRNA_m1G_MT"/>
    <property type="match status" value="1"/>
</dbReference>
<dbReference type="PIRSF" id="PIRSF000386">
    <property type="entry name" value="tRNA_mtase"/>
    <property type="match status" value="1"/>
</dbReference>
<dbReference type="SUPFAM" id="SSF75217">
    <property type="entry name" value="alpha/beta knot"/>
    <property type="match status" value="1"/>
</dbReference>
<feature type="chain" id="PRO_0000060325" description="tRNA (guanine-N(1)-)-methyltransferase">
    <location>
        <begin position="1"/>
        <end position="243"/>
    </location>
</feature>
<feature type="binding site" evidence="1">
    <location>
        <position position="113"/>
    </location>
    <ligand>
        <name>S-adenosyl-L-methionine</name>
        <dbReference type="ChEBI" id="CHEBI:59789"/>
    </ligand>
</feature>
<feature type="binding site" evidence="1">
    <location>
        <begin position="133"/>
        <end position="138"/>
    </location>
    <ligand>
        <name>S-adenosyl-L-methionine</name>
        <dbReference type="ChEBI" id="CHEBI:59789"/>
    </ligand>
</feature>
<reference key="1">
    <citation type="journal article" date="2004" name="J. Mol. Microbiol. Biotechnol.">
        <title>The complete genome sequence of Bacillus licheniformis DSM13, an organism with great industrial potential.</title>
        <authorList>
            <person name="Veith B."/>
            <person name="Herzberg C."/>
            <person name="Steckel S."/>
            <person name="Feesche J."/>
            <person name="Maurer K.H."/>
            <person name="Ehrenreich P."/>
            <person name="Baeumer S."/>
            <person name="Henne A."/>
            <person name="Liesegang H."/>
            <person name="Merkl R."/>
            <person name="Ehrenreich A."/>
            <person name="Gottschalk G."/>
        </authorList>
    </citation>
    <scope>NUCLEOTIDE SEQUENCE [LARGE SCALE GENOMIC DNA]</scope>
    <source>
        <strain>ATCC 14580 / DSM 13 / JCM 2505 / CCUG 7422 / NBRC 12200 / NCIMB 9375 / NCTC 10341 / NRRL NRS-1264 / Gibson 46</strain>
    </source>
</reference>
<reference key="2">
    <citation type="journal article" date="2004" name="Genome Biol.">
        <title>Complete genome sequence of the industrial bacterium Bacillus licheniformis and comparisons with closely related Bacillus species.</title>
        <authorList>
            <person name="Rey M.W."/>
            <person name="Ramaiya P."/>
            <person name="Nelson B.A."/>
            <person name="Brody-Karpin S.D."/>
            <person name="Zaretsky E.J."/>
            <person name="Tang M."/>
            <person name="Lopez de Leon A."/>
            <person name="Xiang H."/>
            <person name="Gusti V."/>
            <person name="Clausen I.G."/>
            <person name="Olsen P.B."/>
            <person name="Rasmussen M.D."/>
            <person name="Andersen J.T."/>
            <person name="Joergensen P.L."/>
            <person name="Larsen T.S."/>
            <person name="Sorokin A."/>
            <person name="Bolotin A."/>
            <person name="Lapidus A."/>
            <person name="Galleron N."/>
            <person name="Ehrlich S.D."/>
            <person name="Berka R.M."/>
        </authorList>
    </citation>
    <scope>NUCLEOTIDE SEQUENCE [LARGE SCALE GENOMIC DNA]</scope>
    <source>
        <strain>ATCC 14580 / DSM 13 / JCM 2505 / CCUG 7422 / NBRC 12200 / NCIMB 9375 / NCTC 10341 / NRRL NRS-1264 / Gibson 46</strain>
    </source>
</reference>
<reference key="3">
    <citation type="submission" date="2007-04" db="EMBL/GenBank/DDBJ databases">
        <authorList>
            <person name="Berka R.M."/>
            <person name="Rey M.W."/>
            <person name="Ramaiya P."/>
        </authorList>
    </citation>
    <scope>SEQUENCE REVISION</scope>
</reference>
<protein>
    <recommendedName>
        <fullName evidence="1">tRNA (guanine-N(1)-)-methyltransferase</fullName>
        <ecNumber evidence="1">2.1.1.228</ecNumber>
    </recommendedName>
    <alternativeName>
        <fullName evidence="1">M1G-methyltransferase</fullName>
    </alternativeName>
    <alternativeName>
        <fullName evidence="1">tRNA [GM37] methyltransferase</fullName>
    </alternativeName>
</protein>